<protein>
    <recommendedName>
        <fullName>Calcium/calmodulin-dependent protein kinase kinase 2</fullName>
        <shortName>CaM-KK 2</shortName>
        <shortName>CaM-kinase kinase 2</shortName>
        <shortName>CaMKK 2</shortName>
        <ecNumber>2.7.11.17</ecNumber>
    </recommendedName>
    <alternativeName>
        <fullName>Calcium/calmodulin-dependent protein kinase kinase beta</fullName>
        <shortName>CaM-KK beta</shortName>
        <shortName>CaM-kinase kinase beta</shortName>
        <shortName>CaMKK beta</shortName>
    </alternativeName>
</protein>
<gene>
    <name type="primary">CAMKK2</name>
    <name type="synonym">CAMKKB</name>
    <name type="synonym">KIAA0787</name>
</gene>
<name>KKCC2_HUMAN</name>
<feature type="initiator methionine" description="Removed" evidence="23">
    <location>
        <position position="1"/>
    </location>
</feature>
<feature type="chain" id="PRO_0000086144" description="Calcium/calmodulin-dependent protein kinase kinase 2">
    <location>
        <begin position="2"/>
        <end position="588"/>
    </location>
</feature>
<feature type="domain" description="Protein kinase" evidence="3">
    <location>
        <begin position="165"/>
        <end position="446"/>
    </location>
</feature>
<feature type="region of interest" description="Disordered" evidence="5">
    <location>
        <begin position="1"/>
        <end position="33"/>
    </location>
</feature>
<feature type="region of interest" description="Disordered" evidence="5">
    <location>
        <begin position="78"/>
        <end position="100"/>
    </location>
</feature>
<feature type="region of interest" description="Disordered" evidence="5">
    <location>
        <begin position="128"/>
        <end position="149"/>
    </location>
</feature>
<feature type="region of interest" description="RP domain">
    <location>
        <begin position="204"/>
        <end position="226"/>
    </location>
</feature>
<feature type="region of interest" description="Disordered" evidence="5">
    <location>
        <begin position="205"/>
        <end position="225"/>
    </location>
</feature>
<feature type="region of interest" description="Autoinhibitory domain" evidence="1">
    <location>
        <begin position="472"/>
        <end position="477"/>
    </location>
</feature>
<feature type="region of interest" description="Calmodulin-binding" evidence="1">
    <location>
        <begin position="475"/>
        <end position="500"/>
    </location>
</feature>
<feature type="region of interest" description="Disordered" evidence="5">
    <location>
        <begin position="497"/>
        <end position="588"/>
    </location>
</feature>
<feature type="compositionally biased region" description="Polar residues" evidence="5">
    <location>
        <begin position="1"/>
        <end position="14"/>
    </location>
</feature>
<feature type="compositionally biased region" description="Low complexity" evidence="5">
    <location>
        <begin position="128"/>
        <end position="139"/>
    </location>
</feature>
<feature type="compositionally biased region" description="Basic and acidic residues" evidence="5">
    <location>
        <begin position="521"/>
        <end position="536"/>
    </location>
</feature>
<feature type="compositionally biased region" description="Basic and acidic residues" evidence="5">
    <location>
        <begin position="579"/>
        <end position="588"/>
    </location>
</feature>
<feature type="active site" description="Proton acceptor" evidence="3 4">
    <location>
        <position position="312"/>
    </location>
</feature>
<feature type="binding site" evidence="3">
    <location>
        <begin position="171"/>
        <end position="179"/>
    </location>
    <ligand>
        <name>ATP</name>
        <dbReference type="ChEBI" id="CHEBI:30616"/>
    </ligand>
</feature>
<feature type="binding site" evidence="3">
    <location>
        <position position="194"/>
    </location>
    <ligand>
        <name>ATP</name>
        <dbReference type="ChEBI" id="CHEBI:30616"/>
    </ligand>
</feature>
<feature type="modified residue" description="N-acetylserine" evidence="23">
    <location>
        <position position="2"/>
    </location>
</feature>
<feature type="modified residue" description="Phosphoserine" evidence="2">
    <location>
        <position position="100"/>
    </location>
</feature>
<feature type="modified residue" description="Phosphoserine" evidence="24">
    <location>
        <position position="114"/>
    </location>
</feature>
<feature type="modified residue" description="Phosphoserine" evidence="24">
    <location>
        <position position="129"/>
    </location>
</feature>
<feature type="modified residue" description="Phosphoserine" evidence="2">
    <location>
        <position position="133"/>
    </location>
</feature>
<feature type="modified residue" description="Phosphoserine" evidence="2">
    <location>
        <position position="137"/>
    </location>
</feature>
<feature type="modified residue" description="Phosphoserine" evidence="22 24 25">
    <location>
        <position position="495"/>
    </location>
</feature>
<feature type="modified residue" description="Phosphoserine" evidence="24">
    <location>
        <position position="511"/>
    </location>
</feature>
<feature type="modified residue" description="Phosphoserine" evidence="2">
    <location>
        <position position="572"/>
    </location>
</feature>
<feature type="splice variant" id="VSP_012142" description="In isoform 4, isoform 5 and isoform 6." evidence="13 16">
    <location>
        <begin position="442"/>
        <end position="484"/>
    </location>
</feature>
<feature type="splice variant" id="VSP_012143" description="In isoform 3 and isoform 5." evidence="13 14 15 16">
    <original>KPTRECESLSELK</original>
    <variation>QGSEDNLQGTDPP</variation>
    <location>
        <begin position="520"/>
        <end position="532"/>
    </location>
</feature>
<feature type="splice variant" id="VSP_012148" description="In isoform 7." evidence="17 19">
    <original>EARQRRQPPGHRPAPRGGGGSA</original>
    <variation>GTKKKKGLDSMTSTVAAGWLDRRV</variation>
    <location>
        <begin position="533"/>
        <end position="554"/>
    </location>
</feature>
<feature type="splice variant" id="VSP_012144" description="In isoform 3 and isoform 5." evidence="13 14 15 16">
    <original>EARQRRQPP</original>
    <variation>PVGEEEVLL</variation>
    <location>
        <begin position="533"/>
        <end position="541"/>
    </location>
</feature>
<feature type="splice variant" id="VSP_012146" description="In isoform 2 and isoform 6." evidence="13 18 20">
    <original>E</original>
    <variation>T</variation>
    <location>
        <position position="533"/>
    </location>
</feature>
<feature type="splice variant" id="VSP_012147" description="In isoform 2 and isoform 6." evidence="13 18 20">
    <location>
        <begin position="534"/>
        <end position="554"/>
    </location>
</feature>
<feature type="splice variant" id="VSP_012145" description="In isoform 3 and isoform 5." evidence="13 14 15 16">
    <location>
        <begin position="542"/>
        <end position="554"/>
    </location>
</feature>
<feature type="splice variant" id="VSP_012149" description="In isoform 2, isoform 3, isoform 5, isoform 6 and isoform 7." evidence="13 14 15 16 17 18 19 20">
    <location>
        <begin position="555"/>
        <end position="588"/>
    </location>
</feature>
<feature type="sequence variant" id="VAR_032788" description="In dbSNP:rs28360477." evidence="9">
    <original>S</original>
    <variation>N</variation>
    <location>
        <position position="10"/>
    </location>
</feature>
<feature type="sequence variant" id="VAR_020532" description="In dbSNP:rs3817190." evidence="6 8 9 12">
    <original>T</original>
    <variation>S</variation>
    <location>
        <position position="85"/>
    </location>
</feature>
<feature type="sequence variant" id="VAR_040610" description="In dbSNP:rs35403710." evidence="9">
    <original>C</original>
    <variation>Y</variation>
    <location>
        <position position="123"/>
    </location>
</feature>
<feature type="sequence variant" id="VAR_040611" description="In a lung neuroendocrine carcinoma sample; somatic mutation." evidence="9">
    <original>P</original>
    <variation>L</variation>
    <location>
        <position position="127"/>
    </location>
</feature>
<feature type="sequence variant" id="VAR_040612" description="In a colorectal adenocarcinoma sample; somatic mutation; dbSNP:rs1207121718." evidence="9">
    <original>A</original>
    <variation>T</variation>
    <location>
        <position position="182"/>
    </location>
</feature>
<feature type="sequence variant" id="VAR_020533" description="In dbSNP:rs1132780.">
    <original>R</original>
    <variation>C</variation>
    <location>
        <position position="363"/>
    </location>
</feature>
<feature type="sequence variant" id="VAR_040613" description="In dbSNP:rs34129994." evidence="9">
    <original>R</original>
    <variation>H</variation>
    <location>
        <position position="492"/>
    </location>
</feature>
<feature type="sequence conflict" description="In Ref. 2; AAD31507." evidence="21" ref="2">
    <original>G</original>
    <variation>A</variation>
    <location>
        <position position="206"/>
    </location>
</feature>
<feature type="sequence conflict" description="In Ref. 6; BAF84761." evidence="21" ref="6">
    <original>F</original>
    <variation>I</variation>
    <location>
        <position position="331"/>
    </location>
</feature>
<feature type="sequence conflict" description="In Ref. 2; AAD31507." evidence="21" ref="2">
    <original>T</original>
    <variation>Y</variation>
    <location>
        <position position="347"/>
    </location>
</feature>
<feature type="sequence conflict" description="In Ref. 2; AAD31507." evidence="21" ref="2">
    <original>L</original>
    <variation>K</variation>
    <location>
        <position position="371"/>
    </location>
</feature>
<feature type="sequence conflict" description="In Ref. 1; AAK91829." evidence="21" ref="1">
    <original>A</original>
    <variation>H</variation>
    <location>
        <position position="554"/>
    </location>
</feature>
<feature type="sequence conflict" description="In Ref. 1; AAK91829." evidence="21" ref="1">
    <original>R</original>
    <variation>N</variation>
    <location>
        <position position="557"/>
    </location>
</feature>
<feature type="strand" evidence="28">
    <location>
        <begin position="165"/>
        <end position="172"/>
    </location>
</feature>
<feature type="strand" evidence="28">
    <location>
        <begin position="175"/>
        <end position="184"/>
    </location>
</feature>
<feature type="turn" evidence="28">
    <location>
        <begin position="185"/>
        <end position="188"/>
    </location>
</feature>
<feature type="strand" evidence="28">
    <location>
        <begin position="189"/>
        <end position="197"/>
    </location>
</feature>
<feature type="helix" evidence="28">
    <location>
        <begin position="198"/>
        <end position="204"/>
    </location>
</feature>
<feature type="helix" evidence="28">
    <location>
        <begin position="231"/>
        <end position="242"/>
    </location>
</feature>
<feature type="strand" evidence="28">
    <location>
        <begin position="251"/>
        <end position="255"/>
    </location>
</feature>
<feature type="strand" evidence="28">
    <location>
        <begin position="260"/>
        <end position="268"/>
    </location>
</feature>
<feature type="strand" evidence="28">
    <location>
        <begin position="273"/>
        <end position="275"/>
    </location>
</feature>
<feature type="helix" evidence="28">
    <location>
        <begin position="286"/>
        <end position="305"/>
    </location>
</feature>
<feature type="helix" evidence="28">
    <location>
        <begin position="315"/>
        <end position="317"/>
    </location>
</feature>
<feature type="strand" evidence="28">
    <location>
        <begin position="318"/>
        <end position="320"/>
    </location>
</feature>
<feature type="strand" evidence="28">
    <location>
        <begin position="326"/>
        <end position="328"/>
    </location>
</feature>
<feature type="strand" evidence="26">
    <location>
        <begin position="338"/>
        <end position="341"/>
    </location>
</feature>
<feature type="strand" evidence="28">
    <location>
        <begin position="343"/>
        <end position="346"/>
    </location>
</feature>
<feature type="helix" evidence="28">
    <location>
        <begin position="351"/>
        <end position="353"/>
    </location>
</feature>
<feature type="helix" evidence="28">
    <location>
        <begin position="356"/>
        <end position="358"/>
    </location>
</feature>
<feature type="strand" evidence="27">
    <location>
        <begin position="364"/>
        <end position="367"/>
    </location>
</feature>
<feature type="helix" evidence="28">
    <location>
        <begin position="368"/>
        <end position="385"/>
    </location>
</feature>
<feature type="helix" evidence="28">
    <location>
        <begin position="395"/>
        <end position="404"/>
    </location>
</feature>
<feature type="strand" evidence="28">
    <location>
        <begin position="411"/>
        <end position="413"/>
    </location>
</feature>
<feature type="helix" evidence="28">
    <location>
        <begin position="417"/>
        <end position="426"/>
    </location>
</feature>
<feature type="turn" evidence="28">
    <location>
        <begin position="431"/>
        <end position="433"/>
    </location>
</feature>
<feature type="helix" evidence="28">
    <location>
        <begin position="437"/>
        <end position="440"/>
    </location>
</feature>
<feature type="helix" evidence="28">
    <location>
        <begin position="444"/>
        <end position="447"/>
    </location>
</feature>
<feature type="turn" evidence="27">
    <location>
        <begin position="448"/>
        <end position="451"/>
    </location>
</feature>
<feature type="helix" evidence="27">
    <location>
        <begin position="457"/>
        <end position="461"/>
    </location>
</feature>
<feature type="modified residue" description="Phosphoserine" evidence="22">
    <location sequence="Q96RR4-3">
        <position position="522"/>
    </location>
</feature>
<feature type="modified residue" description="Phosphoserine" evidence="22">
    <location sequence="Q96RR4-5">
        <position position="479"/>
    </location>
</feature>
<evidence type="ECO:0000250" key="1"/>
<evidence type="ECO:0000250" key="2">
    <source>
        <dbReference type="UniProtKB" id="Q8C078"/>
    </source>
</evidence>
<evidence type="ECO:0000255" key="3">
    <source>
        <dbReference type="PROSITE-ProRule" id="PRU00159"/>
    </source>
</evidence>
<evidence type="ECO:0000255" key="4">
    <source>
        <dbReference type="PROSITE-ProRule" id="PRU10027"/>
    </source>
</evidence>
<evidence type="ECO:0000256" key="5">
    <source>
        <dbReference type="SAM" id="MobiDB-lite"/>
    </source>
</evidence>
<evidence type="ECO:0000269" key="6">
    <source>
    </source>
</evidence>
<evidence type="ECO:0000269" key="7">
    <source>
    </source>
</evidence>
<evidence type="ECO:0000269" key="8">
    <source>
    </source>
</evidence>
<evidence type="ECO:0000269" key="9">
    <source>
    </source>
</evidence>
<evidence type="ECO:0000269" key="10">
    <source>
    </source>
</evidence>
<evidence type="ECO:0000269" key="11">
    <source>
    </source>
</evidence>
<evidence type="ECO:0000269" key="12">
    <source>
    </source>
</evidence>
<evidence type="ECO:0000303" key="13">
    <source>
    </source>
</evidence>
<evidence type="ECO:0000303" key="14">
    <source>
    </source>
</evidence>
<evidence type="ECO:0000303" key="15">
    <source>
    </source>
</evidence>
<evidence type="ECO:0000303" key="16">
    <source>
    </source>
</evidence>
<evidence type="ECO:0000303" key="17">
    <source>
    </source>
</evidence>
<evidence type="ECO:0000303" key="18">
    <source>
    </source>
</evidence>
<evidence type="ECO:0000303" key="19">
    <source>
    </source>
</evidence>
<evidence type="ECO:0000303" key="20">
    <source ref="11"/>
</evidence>
<evidence type="ECO:0000305" key="21"/>
<evidence type="ECO:0007744" key="22">
    <source>
    </source>
</evidence>
<evidence type="ECO:0007744" key="23">
    <source>
    </source>
</evidence>
<evidence type="ECO:0007744" key="24">
    <source>
    </source>
</evidence>
<evidence type="ECO:0007744" key="25">
    <source>
    </source>
</evidence>
<evidence type="ECO:0007829" key="26">
    <source>
        <dbReference type="PDB" id="5UY6"/>
    </source>
</evidence>
<evidence type="ECO:0007829" key="27">
    <source>
        <dbReference type="PDB" id="6CMJ"/>
    </source>
</evidence>
<evidence type="ECO:0007829" key="28">
    <source>
        <dbReference type="PDB" id="8TUC"/>
    </source>
</evidence>
<dbReference type="EC" id="2.7.11.17"/>
<dbReference type="EMBL" id="AB081337">
    <property type="protein sequence ID" value="BAC19841.1"/>
    <property type="molecule type" value="mRNA"/>
</dbReference>
<dbReference type="EMBL" id="AF287630">
    <property type="protein sequence ID" value="AAK64600.1"/>
    <property type="molecule type" value="mRNA"/>
</dbReference>
<dbReference type="EMBL" id="AF287631">
    <property type="protein sequence ID" value="AAK64601.1"/>
    <property type="molecule type" value="mRNA"/>
</dbReference>
<dbReference type="EMBL" id="AF321385">
    <property type="protein sequence ID" value="AAL37215.1"/>
    <property type="molecule type" value="mRNA"/>
</dbReference>
<dbReference type="EMBL" id="AF321386">
    <property type="protein sequence ID" value="AAL37216.1"/>
    <property type="molecule type" value="mRNA"/>
</dbReference>
<dbReference type="EMBL" id="AF321387">
    <property type="protein sequence ID" value="AAL37217.1"/>
    <property type="molecule type" value="mRNA"/>
</dbReference>
<dbReference type="EMBL" id="AF321388">
    <property type="protein sequence ID" value="AAL37218.1"/>
    <property type="molecule type" value="mRNA"/>
</dbReference>
<dbReference type="EMBL" id="AF321401">
    <property type="protein sequence ID" value="AAK91830.1"/>
    <property type="molecule type" value="Genomic_DNA"/>
</dbReference>
<dbReference type="EMBL" id="AF321390">
    <property type="protein sequence ID" value="AAK91830.1"/>
    <property type="status" value="JOINED"/>
    <property type="molecule type" value="Genomic_DNA"/>
</dbReference>
<dbReference type="EMBL" id="AF321391">
    <property type="protein sequence ID" value="AAK91830.1"/>
    <property type="status" value="JOINED"/>
    <property type="molecule type" value="Genomic_DNA"/>
</dbReference>
<dbReference type="EMBL" id="AF321392">
    <property type="protein sequence ID" value="AAK91830.1"/>
    <property type="status" value="JOINED"/>
    <property type="molecule type" value="Genomic_DNA"/>
</dbReference>
<dbReference type="EMBL" id="AF321393">
    <property type="protein sequence ID" value="AAK91830.1"/>
    <property type="status" value="JOINED"/>
    <property type="molecule type" value="Genomic_DNA"/>
</dbReference>
<dbReference type="EMBL" id="AF321394">
    <property type="protein sequence ID" value="AAK91830.1"/>
    <property type="status" value="JOINED"/>
    <property type="molecule type" value="Genomic_DNA"/>
</dbReference>
<dbReference type="EMBL" id="AF321395">
    <property type="protein sequence ID" value="AAK91830.1"/>
    <property type="status" value="JOINED"/>
    <property type="molecule type" value="Genomic_DNA"/>
</dbReference>
<dbReference type="EMBL" id="AF321396">
    <property type="protein sequence ID" value="AAK91830.1"/>
    <property type="status" value="JOINED"/>
    <property type="molecule type" value="Genomic_DNA"/>
</dbReference>
<dbReference type="EMBL" id="AF321397">
    <property type="protein sequence ID" value="AAK91830.1"/>
    <property type="status" value="JOINED"/>
    <property type="molecule type" value="Genomic_DNA"/>
</dbReference>
<dbReference type="EMBL" id="AF321398">
    <property type="protein sequence ID" value="AAK91830.1"/>
    <property type="status" value="JOINED"/>
    <property type="molecule type" value="Genomic_DNA"/>
</dbReference>
<dbReference type="EMBL" id="AF321399">
    <property type="protein sequence ID" value="AAK91830.1"/>
    <property type="status" value="JOINED"/>
    <property type="molecule type" value="Genomic_DNA"/>
</dbReference>
<dbReference type="EMBL" id="AF321400">
    <property type="protein sequence ID" value="AAK91830.1"/>
    <property type="status" value="JOINED"/>
    <property type="molecule type" value="Genomic_DNA"/>
</dbReference>
<dbReference type="EMBL" id="AF321575">
    <property type="protein sequence ID" value="AAK91830.1"/>
    <property type="status" value="JOINED"/>
    <property type="molecule type" value="Genomic_DNA"/>
</dbReference>
<dbReference type="EMBL" id="AF321576">
    <property type="protein sequence ID" value="AAK91830.1"/>
    <property type="status" value="JOINED"/>
    <property type="molecule type" value="Genomic_DNA"/>
</dbReference>
<dbReference type="EMBL" id="AF321577">
    <property type="protein sequence ID" value="AAK91830.1"/>
    <property type="status" value="JOINED"/>
    <property type="molecule type" value="Genomic_DNA"/>
</dbReference>
<dbReference type="EMBL" id="AF321578">
    <property type="protein sequence ID" value="AAK91830.1"/>
    <property type="status" value="JOINED"/>
    <property type="molecule type" value="Genomic_DNA"/>
</dbReference>
<dbReference type="EMBL" id="AF321402">
    <property type="protein sequence ID" value="AAK91829.1"/>
    <property type="molecule type" value="Genomic_DNA"/>
</dbReference>
<dbReference type="EMBL" id="AF321390">
    <property type="protein sequence ID" value="AAK91829.1"/>
    <property type="status" value="JOINED"/>
    <property type="molecule type" value="Genomic_DNA"/>
</dbReference>
<dbReference type="EMBL" id="AF321391">
    <property type="protein sequence ID" value="AAK91829.1"/>
    <property type="status" value="JOINED"/>
    <property type="molecule type" value="Genomic_DNA"/>
</dbReference>
<dbReference type="EMBL" id="AF321392">
    <property type="protein sequence ID" value="AAK91829.1"/>
    <property type="status" value="JOINED"/>
    <property type="molecule type" value="Genomic_DNA"/>
</dbReference>
<dbReference type="EMBL" id="AF321393">
    <property type="protein sequence ID" value="AAK91829.1"/>
    <property type="status" value="JOINED"/>
    <property type="molecule type" value="Genomic_DNA"/>
</dbReference>
<dbReference type="EMBL" id="AF321394">
    <property type="protein sequence ID" value="AAK91829.1"/>
    <property type="status" value="JOINED"/>
    <property type="molecule type" value="Genomic_DNA"/>
</dbReference>
<dbReference type="EMBL" id="AF321395">
    <property type="protein sequence ID" value="AAK91829.1"/>
    <property type="status" value="JOINED"/>
    <property type="molecule type" value="Genomic_DNA"/>
</dbReference>
<dbReference type="EMBL" id="AF321396">
    <property type="protein sequence ID" value="AAK91829.1"/>
    <property type="status" value="JOINED"/>
    <property type="molecule type" value="Genomic_DNA"/>
</dbReference>
<dbReference type="EMBL" id="AF321397">
    <property type="protein sequence ID" value="AAK91829.1"/>
    <property type="status" value="JOINED"/>
    <property type="molecule type" value="Genomic_DNA"/>
</dbReference>
<dbReference type="EMBL" id="AF321398">
    <property type="protein sequence ID" value="AAK91829.1"/>
    <property type="status" value="JOINED"/>
    <property type="molecule type" value="Genomic_DNA"/>
</dbReference>
<dbReference type="EMBL" id="AF321399">
    <property type="protein sequence ID" value="AAK91829.1"/>
    <property type="status" value="JOINED"/>
    <property type="molecule type" value="Genomic_DNA"/>
</dbReference>
<dbReference type="EMBL" id="AF321400">
    <property type="protein sequence ID" value="AAK91829.1"/>
    <property type="status" value="JOINED"/>
    <property type="molecule type" value="Genomic_DNA"/>
</dbReference>
<dbReference type="EMBL" id="AF321575">
    <property type="protein sequence ID" value="AAK91829.1"/>
    <property type="status" value="JOINED"/>
    <property type="molecule type" value="Genomic_DNA"/>
</dbReference>
<dbReference type="EMBL" id="AF321576">
    <property type="protein sequence ID" value="AAK91829.1"/>
    <property type="status" value="JOINED"/>
    <property type="molecule type" value="Genomic_DNA"/>
</dbReference>
<dbReference type="EMBL" id="AF321577">
    <property type="protein sequence ID" value="AAK91829.1"/>
    <property type="status" value="JOINED"/>
    <property type="molecule type" value="Genomic_DNA"/>
</dbReference>
<dbReference type="EMBL" id="AF321578">
    <property type="protein sequence ID" value="AAK91829.1"/>
    <property type="status" value="JOINED"/>
    <property type="molecule type" value="Genomic_DNA"/>
</dbReference>
<dbReference type="EMBL" id="AF140507">
    <property type="protein sequence ID" value="AAD31507.1"/>
    <property type="molecule type" value="mRNA"/>
</dbReference>
<dbReference type="EMBL" id="AB081336">
    <property type="protein sequence ID" value="BAC19840.1"/>
    <property type="molecule type" value="mRNA"/>
</dbReference>
<dbReference type="EMBL" id="AB018330">
    <property type="protein sequence ID" value="BAA34507.2"/>
    <property type="status" value="ALT_INIT"/>
    <property type="molecule type" value="mRNA"/>
</dbReference>
<dbReference type="EMBL" id="AK292072">
    <property type="protein sequence ID" value="BAF84761.1"/>
    <property type="molecule type" value="mRNA"/>
</dbReference>
<dbReference type="EMBL" id="AC069209">
    <property type="status" value="NOT_ANNOTATED_CDS"/>
    <property type="molecule type" value="Genomic_DNA"/>
</dbReference>
<dbReference type="EMBL" id="BC000318">
    <property type="protein sequence ID" value="AAH00318.2"/>
    <property type="molecule type" value="mRNA"/>
</dbReference>
<dbReference type="EMBL" id="BC026060">
    <property type="protein sequence ID" value="AAH26060.1"/>
    <property type="molecule type" value="mRNA"/>
</dbReference>
<dbReference type="EMBL" id="AF101264">
    <property type="protein sequence ID" value="AAD04566.1"/>
    <property type="molecule type" value="mRNA"/>
</dbReference>
<dbReference type="EMBL" id="AL834322">
    <property type="protein sequence ID" value="CAD38990.1"/>
    <property type="status" value="ALT_SEQ"/>
    <property type="molecule type" value="mRNA"/>
</dbReference>
<dbReference type="EMBL" id="AF091074">
    <property type="protein sequence ID" value="AAC72943.1"/>
    <property type="status" value="ALT_INIT"/>
    <property type="molecule type" value="mRNA"/>
</dbReference>
<dbReference type="CCDS" id="CCDS44999.1">
    <molecule id="Q96RR4-2"/>
</dbReference>
<dbReference type="CCDS" id="CCDS53837.1">
    <molecule id="Q96RR4-6"/>
</dbReference>
<dbReference type="CCDS" id="CCDS58283.1">
    <molecule id="Q96RR4-7"/>
</dbReference>
<dbReference type="CCDS" id="CCDS9216.1">
    <molecule id="Q96RR4-1"/>
</dbReference>
<dbReference type="CCDS" id="CCDS9217.1">
    <molecule id="Q96RR4-4"/>
</dbReference>
<dbReference type="CCDS" id="CCDS9218.1">
    <molecule id="Q96RR4-3"/>
</dbReference>
<dbReference type="CCDS" id="CCDS9219.1">
    <molecule id="Q96RR4-5"/>
</dbReference>
<dbReference type="PIR" id="JE0191">
    <property type="entry name" value="JE0191"/>
</dbReference>
<dbReference type="RefSeq" id="NP_001257414.1">
    <molecule id="Q96RR4-1"/>
    <property type="nucleotide sequence ID" value="NM_001270485.2"/>
</dbReference>
<dbReference type="RefSeq" id="NP_001257415.1">
    <molecule id="Q96RR4-7"/>
    <property type="nucleotide sequence ID" value="NM_001270486.1"/>
</dbReference>
<dbReference type="RefSeq" id="NP_006540.3">
    <molecule id="Q96RR4-1"/>
    <property type="nucleotide sequence ID" value="NM_006549.3"/>
</dbReference>
<dbReference type="RefSeq" id="NP_705719.2">
    <molecule id="Q96RR4-3"/>
    <property type="nucleotide sequence ID" value="NM_153499.2"/>
</dbReference>
<dbReference type="RefSeq" id="NP_705720.1">
    <molecule id="Q96RR4-5"/>
    <property type="nucleotide sequence ID" value="NM_153500.2"/>
</dbReference>
<dbReference type="RefSeq" id="NP_757363.1">
    <molecule id="Q96RR4-2"/>
    <property type="nucleotide sequence ID" value="NM_172214.3"/>
</dbReference>
<dbReference type="RefSeq" id="NP_757364.1">
    <molecule id="Q96RR4-6"/>
    <property type="nucleotide sequence ID" value="NM_172215.3"/>
</dbReference>
<dbReference type="RefSeq" id="NP_757365.1">
    <molecule id="Q96RR4-4"/>
    <property type="nucleotide sequence ID" value="NM_172216.2"/>
</dbReference>
<dbReference type="RefSeq" id="NP_757380.1">
    <molecule id="Q96RR4-3"/>
    <property type="nucleotide sequence ID" value="NM_172226.3"/>
</dbReference>
<dbReference type="RefSeq" id="XP_005253879.1">
    <molecule id="Q96RR4-4"/>
    <property type="nucleotide sequence ID" value="XM_005253822.3"/>
</dbReference>
<dbReference type="RefSeq" id="XP_005253880.1">
    <molecule id="Q96RR4-2"/>
    <property type="nucleotide sequence ID" value="XM_005253823.1"/>
</dbReference>
<dbReference type="RefSeq" id="XP_005253881.1">
    <molecule id="Q96RR4-5"/>
    <property type="nucleotide sequence ID" value="XM_005253824.3"/>
</dbReference>
<dbReference type="RefSeq" id="XP_011536065.1">
    <molecule id="Q96RR4-7"/>
    <property type="nucleotide sequence ID" value="XM_011537763.1"/>
</dbReference>
<dbReference type="RefSeq" id="XP_016874187.1">
    <property type="nucleotide sequence ID" value="XM_017018698.1"/>
</dbReference>
<dbReference type="RefSeq" id="XP_016874190.1">
    <property type="nucleotide sequence ID" value="XM_017018701.1"/>
</dbReference>
<dbReference type="RefSeq" id="XP_016874191.1">
    <molecule id="Q96RR4-7"/>
    <property type="nucleotide sequence ID" value="XM_017018702.3"/>
</dbReference>
<dbReference type="RefSeq" id="XP_016874193.1">
    <property type="nucleotide sequence ID" value="XM_017018704.1"/>
</dbReference>
<dbReference type="RefSeq" id="XP_047284057.1">
    <molecule id="Q96RR4-1"/>
    <property type="nucleotide sequence ID" value="XM_047428101.1"/>
</dbReference>
<dbReference type="RefSeq" id="XP_047284058.1">
    <molecule id="Q96RR4-7"/>
    <property type="nucleotide sequence ID" value="XM_047428102.1"/>
</dbReference>
<dbReference type="RefSeq" id="XP_047284059.1">
    <molecule id="Q96RR4-3"/>
    <property type="nucleotide sequence ID" value="XM_047428103.1"/>
</dbReference>
<dbReference type="RefSeq" id="XP_047284060.1">
    <molecule id="Q96RR4-2"/>
    <property type="nucleotide sequence ID" value="XM_047428104.1"/>
</dbReference>
<dbReference type="RefSeq" id="XP_047284063.1">
    <molecule id="Q96RR4-5"/>
    <property type="nucleotide sequence ID" value="XM_047428107.1"/>
</dbReference>
<dbReference type="RefSeq" id="XP_047284064.1">
    <molecule id="Q96RR4-6"/>
    <property type="nucleotide sequence ID" value="XM_047428108.1"/>
</dbReference>
<dbReference type="RefSeq" id="XP_054226771.1">
    <molecule id="Q96RR4-1"/>
    <property type="nucleotide sequence ID" value="XM_054370796.1"/>
</dbReference>
<dbReference type="RefSeq" id="XP_054226772.1">
    <molecule id="Q96RR4-7"/>
    <property type="nucleotide sequence ID" value="XM_054370797.1"/>
</dbReference>
<dbReference type="RefSeq" id="XP_054226773.1">
    <molecule id="Q96RR4-7"/>
    <property type="nucleotide sequence ID" value="XM_054370798.1"/>
</dbReference>
<dbReference type="RefSeq" id="XP_054226774.1">
    <molecule id="Q96RR4-7"/>
    <property type="nucleotide sequence ID" value="XM_054370799.1"/>
</dbReference>
<dbReference type="RefSeq" id="XP_054226775.1">
    <molecule id="Q96RR4-4"/>
    <property type="nucleotide sequence ID" value="XM_054370800.1"/>
</dbReference>
<dbReference type="RefSeq" id="XP_054226776.1">
    <molecule id="Q96RR4-3"/>
    <property type="nucleotide sequence ID" value="XM_054370801.1"/>
</dbReference>
<dbReference type="RefSeq" id="XP_054226777.1">
    <molecule id="Q96RR4-2"/>
    <property type="nucleotide sequence ID" value="XM_054370802.1"/>
</dbReference>
<dbReference type="RefSeq" id="XP_054226778.1">
    <molecule id="Q96RR4-2"/>
    <property type="nucleotide sequence ID" value="XM_054370803.1"/>
</dbReference>
<dbReference type="RefSeq" id="XP_054226781.1">
    <molecule id="Q96RR4-5"/>
    <property type="nucleotide sequence ID" value="XM_054370806.1"/>
</dbReference>
<dbReference type="RefSeq" id="XP_054226782.1">
    <molecule id="Q96RR4-5"/>
    <property type="nucleotide sequence ID" value="XM_054370807.1"/>
</dbReference>
<dbReference type="RefSeq" id="XP_054226783.1">
    <molecule id="Q96RR4-6"/>
    <property type="nucleotide sequence ID" value="XM_054370808.1"/>
</dbReference>
<dbReference type="PDB" id="2ZV2">
    <property type="method" value="X-ray"/>
    <property type="resolution" value="2.40 A"/>
    <property type="chains" value="A=158-448"/>
</dbReference>
<dbReference type="PDB" id="5UY6">
    <property type="method" value="X-ray"/>
    <property type="resolution" value="1.70 A"/>
    <property type="chains" value="A=161-449"/>
</dbReference>
<dbReference type="PDB" id="5UYJ">
    <property type="method" value="X-ray"/>
    <property type="resolution" value="1.60 A"/>
    <property type="chains" value="A=161-449"/>
</dbReference>
<dbReference type="PDB" id="5VT1">
    <property type="method" value="X-ray"/>
    <property type="resolution" value="1.90 A"/>
    <property type="chains" value="A=161-449"/>
</dbReference>
<dbReference type="PDB" id="5YV8">
    <property type="method" value="X-ray"/>
    <property type="resolution" value="1.93 A"/>
    <property type="chains" value="A=158-448"/>
</dbReference>
<dbReference type="PDB" id="5YV9">
    <property type="method" value="X-ray"/>
    <property type="resolution" value="2.53 A"/>
    <property type="chains" value="A=158-448"/>
</dbReference>
<dbReference type="PDB" id="5YVA">
    <property type="method" value="X-ray"/>
    <property type="resolution" value="2.57 A"/>
    <property type="chains" value="A=158-448"/>
</dbReference>
<dbReference type="PDB" id="5YVB">
    <property type="method" value="X-ray"/>
    <property type="resolution" value="2.02 A"/>
    <property type="chains" value="A=158-448"/>
</dbReference>
<dbReference type="PDB" id="5YVC">
    <property type="method" value="X-ray"/>
    <property type="resolution" value="2.02 A"/>
    <property type="chains" value="A=158-448"/>
</dbReference>
<dbReference type="PDB" id="6BKU">
    <property type="method" value="X-ray"/>
    <property type="resolution" value="2.00 A"/>
    <property type="chains" value="A=162-449"/>
</dbReference>
<dbReference type="PDB" id="6BLE">
    <property type="method" value="X-ray"/>
    <property type="resolution" value="1.90 A"/>
    <property type="chains" value="A=161-449"/>
</dbReference>
<dbReference type="PDB" id="6BQL">
    <property type="method" value="X-ray"/>
    <property type="resolution" value="2.00 A"/>
    <property type="chains" value="A=161-449"/>
</dbReference>
<dbReference type="PDB" id="6BQP">
    <property type="method" value="X-ray"/>
    <property type="resolution" value="1.95 A"/>
    <property type="chains" value="A=161-449"/>
</dbReference>
<dbReference type="PDB" id="6BQQ">
    <property type="method" value="X-ray"/>
    <property type="resolution" value="1.80 A"/>
    <property type="chains" value="A=161-449"/>
</dbReference>
<dbReference type="PDB" id="6BRC">
    <property type="method" value="X-ray"/>
    <property type="resolution" value="2.20 A"/>
    <property type="chains" value="A/B=161-449"/>
</dbReference>
<dbReference type="PDB" id="6CMJ">
    <property type="method" value="X-ray"/>
    <property type="resolution" value="2.40 A"/>
    <property type="chains" value="A/B=149-465"/>
</dbReference>
<dbReference type="PDB" id="6EF5">
    <property type="method" value="X-ray"/>
    <property type="resolution" value="2.44 A"/>
    <property type="chains" value="Q/S=508-514"/>
</dbReference>
<dbReference type="PDB" id="6EWW">
    <property type="method" value="X-ray"/>
    <property type="resolution" value="2.68 A"/>
    <property type="chains" value="E/F/G/H=97-104"/>
</dbReference>
<dbReference type="PDB" id="6FEL">
    <property type="method" value="X-ray"/>
    <property type="resolution" value="2.84 A"/>
    <property type="chains" value="E/F/G/H=508-515"/>
</dbReference>
<dbReference type="PDB" id="6Y3O">
    <property type="method" value="X-ray"/>
    <property type="resolution" value="1.50 A"/>
    <property type="chains" value="P=97-104"/>
</dbReference>
<dbReference type="PDB" id="6Y4K">
    <property type="method" value="X-ray"/>
    <property type="resolution" value="3.00 A"/>
    <property type="chains" value="E/F=97-104"/>
</dbReference>
<dbReference type="PDB" id="6Y6B">
    <property type="method" value="X-ray"/>
    <property type="resolution" value="3.08 A"/>
    <property type="chains" value="C/D=97-104"/>
</dbReference>
<dbReference type="PDB" id="6Y8A">
    <property type="method" value="X-ray"/>
    <property type="resolution" value="1.50 A"/>
    <property type="chains" value="P=508-515"/>
</dbReference>
<dbReference type="PDB" id="8TUC">
    <property type="method" value="X-ray"/>
    <property type="resolution" value="1.50 A"/>
    <property type="chains" value="A=161-449"/>
</dbReference>
<dbReference type="PDBsum" id="2ZV2"/>
<dbReference type="PDBsum" id="5UY6"/>
<dbReference type="PDBsum" id="5UYJ"/>
<dbReference type="PDBsum" id="5VT1"/>
<dbReference type="PDBsum" id="5YV8"/>
<dbReference type="PDBsum" id="5YV9"/>
<dbReference type="PDBsum" id="5YVA"/>
<dbReference type="PDBsum" id="5YVB"/>
<dbReference type="PDBsum" id="5YVC"/>
<dbReference type="PDBsum" id="6BKU"/>
<dbReference type="PDBsum" id="6BLE"/>
<dbReference type="PDBsum" id="6BQL"/>
<dbReference type="PDBsum" id="6BQP"/>
<dbReference type="PDBsum" id="6BQQ"/>
<dbReference type="PDBsum" id="6BRC"/>
<dbReference type="PDBsum" id="6CMJ"/>
<dbReference type="PDBsum" id="6EF5"/>
<dbReference type="PDBsum" id="6EWW"/>
<dbReference type="PDBsum" id="6FEL"/>
<dbReference type="PDBsum" id="6Y3O"/>
<dbReference type="PDBsum" id="6Y4K"/>
<dbReference type="PDBsum" id="6Y6B"/>
<dbReference type="PDBsum" id="6Y8A"/>
<dbReference type="PDBsum" id="8TUC"/>
<dbReference type="SASBDB" id="Q96RR4"/>
<dbReference type="SMR" id="Q96RR4"/>
<dbReference type="BioGRID" id="115889">
    <property type="interactions" value="75"/>
</dbReference>
<dbReference type="FunCoup" id="Q96RR4">
    <property type="interactions" value="2743"/>
</dbReference>
<dbReference type="IntAct" id="Q96RR4">
    <property type="interactions" value="51"/>
</dbReference>
<dbReference type="STRING" id="9606.ENSP00000312741"/>
<dbReference type="BindingDB" id="Q96RR4"/>
<dbReference type="ChEMBL" id="CHEMBL5284"/>
<dbReference type="DrugBank" id="DB12010">
    <property type="generic name" value="Fostamatinib"/>
</dbReference>
<dbReference type="DrugCentral" id="Q96RR4"/>
<dbReference type="GuidetoPHARMACOLOGY" id="1957"/>
<dbReference type="GlyCosmos" id="Q96RR4">
    <property type="glycosylation" value="1 site, 1 glycan"/>
</dbReference>
<dbReference type="GlyGen" id="Q96RR4">
    <property type="glycosylation" value="1 site, 1 O-linked glycan (1 site)"/>
</dbReference>
<dbReference type="iPTMnet" id="Q96RR4"/>
<dbReference type="PhosphoSitePlus" id="Q96RR4"/>
<dbReference type="SwissPalm" id="Q96RR4"/>
<dbReference type="BioMuta" id="CAMKK2"/>
<dbReference type="DMDM" id="317373374"/>
<dbReference type="jPOST" id="Q96RR4"/>
<dbReference type="MassIVE" id="Q96RR4"/>
<dbReference type="PaxDb" id="9606-ENSP00000312741"/>
<dbReference type="PeptideAtlas" id="Q96RR4"/>
<dbReference type="ProteomicsDB" id="78009">
    <molecule id="Q96RR4-1"/>
</dbReference>
<dbReference type="ProteomicsDB" id="78010">
    <molecule id="Q96RR4-2"/>
</dbReference>
<dbReference type="ProteomicsDB" id="78011">
    <molecule id="Q96RR4-3"/>
</dbReference>
<dbReference type="ProteomicsDB" id="78012">
    <molecule id="Q96RR4-4"/>
</dbReference>
<dbReference type="ProteomicsDB" id="78013">
    <molecule id="Q96RR4-5"/>
</dbReference>
<dbReference type="ProteomicsDB" id="78014">
    <molecule id="Q96RR4-6"/>
</dbReference>
<dbReference type="ProteomicsDB" id="78015">
    <molecule id="Q96RR4-7"/>
</dbReference>
<dbReference type="Pumba" id="Q96RR4"/>
<dbReference type="Antibodypedia" id="19059">
    <property type="antibodies" value="383 antibodies from 35 providers"/>
</dbReference>
<dbReference type="DNASU" id="10645"/>
<dbReference type="Ensembl" id="ENST00000324774.9">
    <molecule id="Q96RR4-1"/>
    <property type="protein sequence ID" value="ENSP00000312741.5"/>
    <property type="gene ID" value="ENSG00000110931.19"/>
</dbReference>
<dbReference type="Ensembl" id="ENST00000337174.7">
    <molecule id="Q96RR4-3"/>
    <property type="protein sequence ID" value="ENSP00000336634.3"/>
    <property type="gene ID" value="ENSG00000110931.19"/>
</dbReference>
<dbReference type="Ensembl" id="ENST00000347034.6">
    <molecule id="Q96RR4-4"/>
    <property type="protein sequence ID" value="ENSP00000321230.3"/>
    <property type="gene ID" value="ENSG00000110931.19"/>
</dbReference>
<dbReference type="Ensembl" id="ENST00000392473.2">
    <molecule id="Q96RR4-2"/>
    <property type="protein sequence ID" value="ENSP00000376265.2"/>
    <property type="gene ID" value="ENSG00000110931.19"/>
</dbReference>
<dbReference type="Ensembl" id="ENST00000392474.6">
    <molecule id="Q96RR4-7"/>
    <property type="protein sequence ID" value="ENSP00000376266.2"/>
    <property type="gene ID" value="ENSG00000110931.19"/>
</dbReference>
<dbReference type="Ensembl" id="ENST00000402834.8">
    <molecule id="Q96RR4-1"/>
    <property type="protein sequence ID" value="ENSP00000384591.4"/>
    <property type="gene ID" value="ENSG00000110931.19"/>
</dbReference>
<dbReference type="Ensembl" id="ENST00000404169.8">
    <molecule id="Q96RR4-1"/>
    <property type="protein sequence ID" value="ENSP00000384600.3"/>
    <property type="gene ID" value="ENSG00000110931.19"/>
</dbReference>
<dbReference type="Ensembl" id="ENST00000412367.6">
    <molecule id="Q96RR4-3"/>
    <property type="protein sequence ID" value="ENSP00000388368.2"/>
    <property type="gene ID" value="ENSG00000110931.19"/>
</dbReference>
<dbReference type="Ensembl" id="ENST00000446440.6">
    <molecule id="Q96RR4-6"/>
    <property type="protein sequence ID" value="ENSP00000388273.2"/>
    <property type="gene ID" value="ENSG00000110931.19"/>
</dbReference>
<dbReference type="Ensembl" id="ENST00000538733.5">
    <molecule id="Q96RR4-5"/>
    <property type="protein sequence ID" value="ENSP00000445944.1"/>
    <property type="gene ID" value="ENSG00000110931.19"/>
</dbReference>
<dbReference type="Ensembl" id="ENST00000652382.1">
    <molecule id="Q96RR4-1"/>
    <property type="protein sequence ID" value="ENSP00000498824.1"/>
    <property type="gene ID" value="ENSG00000110931.19"/>
</dbReference>
<dbReference type="GeneID" id="10645"/>
<dbReference type="KEGG" id="hsa:10645"/>
<dbReference type="MANE-Select" id="ENST00000404169.8">
    <property type="protein sequence ID" value="ENSP00000384600.3"/>
    <property type="RefSeq nucleotide sequence ID" value="NM_001270485.2"/>
    <property type="RefSeq protein sequence ID" value="NP_001257414.1"/>
</dbReference>
<dbReference type="UCSC" id="uc001tzt.4">
    <molecule id="Q96RR4-1"/>
    <property type="organism name" value="human"/>
</dbReference>
<dbReference type="AGR" id="HGNC:1470"/>
<dbReference type="CTD" id="10645"/>
<dbReference type="DisGeNET" id="10645"/>
<dbReference type="GeneCards" id="CAMKK2"/>
<dbReference type="HGNC" id="HGNC:1470">
    <property type="gene designation" value="CAMKK2"/>
</dbReference>
<dbReference type="HPA" id="ENSG00000110931">
    <property type="expression patterns" value="Tissue enriched (brain)"/>
</dbReference>
<dbReference type="MIM" id="615002">
    <property type="type" value="gene"/>
</dbReference>
<dbReference type="neXtProt" id="NX_Q96RR4"/>
<dbReference type="OpenTargets" id="ENSG00000110931"/>
<dbReference type="PharmGKB" id="PA26052"/>
<dbReference type="VEuPathDB" id="HostDB:ENSG00000110931"/>
<dbReference type="eggNOG" id="KOG0585">
    <property type="taxonomic scope" value="Eukaryota"/>
</dbReference>
<dbReference type="GeneTree" id="ENSGT00940000161828"/>
<dbReference type="HOGENOM" id="CLU_000288_63_0_1"/>
<dbReference type="InParanoid" id="Q96RR4"/>
<dbReference type="OMA" id="EPRSECR"/>
<dbReference type="OrthoDB" id="68483at2759"/>
<dbReference type="PAN-GO" id="Q96RR4">
    <property type="GO annotations" value="4 GO annotations based on evolutionary models"/>
</dbReference>
<dbReference type="PhylomeDB" id="Q96RR4"/>
<dbReference type="TreeFam" id="TF313013"/>
<dbReference type="BRENDA" id="2.7.11.17">
    <property type="organism ID" value="2681"/>
</dbReference>
<dbReference type="PathwayCommons" id="Q96RR4"/>
<dbReference type="Reactome" id="R-HSA-111932">
    <property type="pathway name" value="CaMK IV-mediated phosphorylation of CREB"/>
</dbReference>
<dbReference type="Reactome" id="R-HSA-442729">
    <property type="pathway name" value="CREB1 phosphorylation through the activation of CaMKII/CaMKK/CaMKIV cascasde"/>
</dbReference>
<dbReference type="Reactome" id="R-HSA-9619229">
    <property type="pathway name" value="Activation of RAC1 downstream of NMDARs"/>
</dbReference>
<dbReference type="Reactome" id="R-HSA-9619483">
    <property type="pathway name" value="Activation of AMPK downstream of NMDARs"/>
</dbReference>
<dbReference type="SignaLink" id="Q96RR4"/>
<dbReference type="SIGNOR" id="Q96RR4"/>
<dbReference type="BioGRID-ORCS" id="10645">
    <property type="hits" value="17 hits in 1185 CRISPR screens"/>
</dbReference>
<dbReference type="CD-CODE" id="FB4E32DD">
    <property type="entry name" value="Presynaptic clusters and postsynaptic densities"/>
</dbReference>
<dbReference type="ChiTaRS" id="CAMKK2">
    <property type="organism name" value="human"/>
</dbReference>
<dbReference type="EvolutionaryTrace" id="Q96RR4"/>
<dbReference type="GeneWiki" id="CAMKK2"/>
<dbReference type="GenomeRNAi" id="10645"/>
<dbReference type="Pharos" id="Q96RR4">
    <property type="development level" value="Tchem"/>
</dbReference>
<dbReference type="PRO" id="PR:Q96RR4"/>
<dbReference type="Proteomes" id="UP000005640">
    <property type="component" value="Chromosome 12"/>
</dbReference>
<dbReference type="RNAct" id="Q96RR4">
    <property type="molecule type" value="protein"/>
</dbReference>
<dbReference type="Bgee" id="ENSG00000110931">
    <property type="expression patterns" value="Expressed in cerebellar cortex and 202 other cell types or tissues"/>
</dbReference>
<dbReference type="ExpressionAtlas" id="Q96RR4">
    <property type="expression patterns" value="baseline and differential"/>
</dbReference>
<dbReference type="GO" id="GO:0005829">
    <property type="term" value="C:cytosol"/>
    <property type="evidence" value="ECO:0000314"/>
    <property type="project" value="HPA"/>
</dbReference>
<dbReference type="GO" id="GO:0043005">
    <property type="term" value="C:neuron projection"/>
    <property type="evidence" value="ECO:0007669"/>
    <property type="project" value="UniProtKB-SubCell"/>
</dbReference>
<dbReference type="GO" id="GO:0005654">
    <property type="term" value="C:nucleoplasm"/>
    <property type="evidence" value="ECO:0000304"/>
    <property type="project" value="Reactome"/>
</dbReference>
<dbReference type="GO" id="GO:0005524">
    <property type="term" value="F:ATP binding"/>
    <property type="evidence" value="ECO:0007669"/>
    <property type="project" value="UniProtKB-KW"/>
</dbReference>
<dbReference type="GO" id="GO:0005509">
    <property type="term" value="F:calcium ion binding"/>
    <property type="evidence" value="ECO:0000314"/>
    <property type="project" value="UniProtKB"/>
</dbReference>
<dbReference type="GO" id="GO:0004683">
    <property type="term" value="F:calcium/calmodulin-dependent protein kinase activity"/>
    <property type="evidence" value="ECO:0007669"/>
    <property type="project" value="UniProtKB-EC"/>
</dbReference>
<dbReference type="GO" id="GO:0005516">
    <property type="term" value="F:calmodulin binding"/>
    <property type="evidence" value="ECO:0000304"/>
    <property type="project" value="UniProtKB"/>
</dbReference>
<dbReference type="GO" id="GO:0106310">
    <property type="term" value="F:protein serine kinase activity"/>
    <property type="evidence" value="ECO:0007669"/>
    <property type="project" value="RHEA"/>
</dbReference>
<dbReference type="GO" id="GO:0004674">
    <property type="term" value="F:protein serine/threonine kinase activity"/>
    <property type="evidence" value="ECO:0000318"/>
    <property type="project" value="GO_Central"/>
</dbReference>
<dbReference type="GO" id="GO:0004713">
    <property type="term" value="F:protein tyrosine kinase activity"/>
    <property type="evidence" value="ECO:0000304"/>
    <property type="project" value="UniProtKB"/>
</dbReference>
<dbReference type="GO" id="GO:0019722">
    <property type="term" value="P:calcium-mediated signaling"/>
    <property type="evidence" value="ECO:0000304"/>
    <property type="project" value="UniProtKB"/>
</dbReference>
<dbReference type="GO" id="GO:0061762">
    <property type="term" value="P:CAMKK-AMPK signaling cascade"/>
    <property type="evidence" value="ECO:0000315"/>
    <property type="project" value="ParkinsonsUK-UCL"/>
</dbReference>
<dbReference type="GO" id="GO:0034614">
    <property type="term" value="P:cellular response to reactive oxygen species"/>
    <property type="evidence" value="ECO:0000304"/>
    <property type="project" value="ParkinsonsUK-UCL"/>
</dbReference>
<dbReference type="GO" id="GO:0000165">
    <property type="term" value="P:MAPK cascade"/>
    <property type="evidence" value="ECO:0000304"/>
    <property type="project" value="UniProtKB"/>
</dbReference>
<dbReference type="GO" id="GO:1903599">
    <property type="term" value="P:positive regulation of autophagy of mitochondrion"/>
    <property type="evidence" value="ECO:0000315"/>
    <property type="project" value="ParkinsonsUK-UCL"/>
</dbReference>
<dbReference type="GO" id="GO:0045893">
    <property type="term" value="P:positive regulation of DNA-templated transcription"/>
    <property type="evidence" value="ECO:0000304"/>
    <property type="project" value="UniProtKB"/>
</dbReference>
<dbReference type="GO" id="GO:0046777">
    <property type="term" value="P:protein autophosphorylation"/>
    <property type="evidence" value="ECO:0000314"/>
    <property type="project" value="UniProtKB"/>
</dbReference>
<dbReference type="GO" id="GO:0006468">
    <property type="term" value="P:protein phosphorylation"/>
    <property type="evidence" value="ECO:0000314"/>
    <property type="project" value="UniProtKB"/>
</dbReference>
<dbReference type="GO" id="GO:0045859">
    <property type="term" value="P:regulation of protein kinase activity"/>
    <property type="evidence" value="ECO:0000304"/>
    <property type="project" value="UniProtKB"/>
</dbReference>
<dbReference type="CDD" id="cd14199">
    <property type="entry name" value="STKc_CaMKK2"/>
    <property type="match status" value="1"/>
</dbReference>
<dbReference type="FunFam" id="3.30.200.20:FF:000429">
    <property type="entry name" value="Calcium/calmodulin-dependent protein kinase kinase"/>
    <property type="match status" value="1"/>
</dbReference>
<dbReference type="FunFam" id="1.10.510.10:FF:000091">
    <property type="entry name" value="Calcium/calmodulin-dependent protein kinase kinase 2 isoform 1"/>
    <property type="match status" value="1"/>
</dbReference>
<dbReference type="Gene3D" id="3.30.200.20">
    <property type="entry name" value="Phosphorylase Kinase, domain 1"/>
    <property type="match status" value="1"/>
</dbReference>
<dbReference type="Gene3D" id="1.10.510.10">
    <property type="entry name" value="Transferase(Phosphotransferase) domain 1"/>
    <property type="match status" value="1"/>
</dbReference>
<dbReference type="InterPro" id="IPR011009">
    <property type="entry name" value="Kinase-like_dom_sf"/>
</dbReference>
<dbReference type="InterPro" id="IPR000719">
    <property type="entry name" value="Prot_kinase_dom"/>
</dbReference>
<dbReference type="InterPro" id="IPR017441">
    <property type="entry name" value="Protein_kinase_ATP_BS"/>
</dbReference>
<dbReference type="InterPro" id="IPR008271">
    <property type="entry name" value="Ser/Thr_kinase_AS"/>
</dbReference>
<dbReference type="PANTHER" id="PTHR43895">
    <property type="entry name" value="CALCIUM/CALMODULIN-DEPENDENT PROTEIN KINASE KINASE-RELATED"/>
    <property type="match status" value="1"/>
</dbReference>
<dbReference type="PANTHER" id="PTHR43895:SF39">
    <property type="entry name" value="CALCIUM_CALMODULIN-DEPENDENT PROTEIN KINASE KINASE 2"/>
    <property type="match status" value="1"/>
</dbReference>
<dbReference type="Pfam" id="PF00069">
    <property type="entry name" value="Pkinase"/>
    <property type="match status" value="1"/>
</dbReference>
<dbReference type="SMART" id="SM00220">
    <property type="entry name" value="S_TKc"/>
    <property type="match status" value="1"/>
</dbReference>
<dbReference type="SUPFAM" id="SSF56112">
    <property type="entry name" value="Protein kinase-like (PK-like)"/>
    <property type="match status" value="1"/>
</dbReference>
<dbReference type="PROSITE" id="PS00107">
    <property type="entry name" value="PROTEIN_KINASE_ATP"/>
    <property type="match status" value="1"/>
</dbReference>
<dbReference type="PROSITE" id="PS50011">
    <property type="entry name" value="PROTEIN_KINASE_DOM"/>
    <property type="match status" value="1"/>
</dbReference>
<dbReference type="PROSITE" id="PS00108">
    <property type="entry name" value="PROTEIN_KINASE_ST"/>
    <property type="match status" value="1"/>
</dbReference>
<sequence length="588" mass="64746">MSSCVSSQPSSNRAAPQDELGGRGSSSSESQKPCEALRGLSSLSIHLGMESFIVVTECEPGCAVDLGLARDRPLEADGQEVPLDTSGSQARPHLSGRKLSLQERSQGGLAAGGSLDMNGRCICPSLPYSPVSSPQSSPRLPRRPTVESHHVSITGMQDCVQLNQYTLKDEIGKGSYGVVKLAYNENDNTYYAMKVLSKKKLIRQAGFPRRPPPRGTRPAPGGCIQPRGPIEQVYQEIAILKKLDHPNVVKLVEVLDDPNEDHLYMVFELVNQGPVMEVPTLKPLSEDQARFYFQDLIKGIEYLHYQKIIHRDIKPSNLLVGEDGHIKIADFGVSNEFKGSDALLSNTVGTPAFMAPESLSETRKIFSGKALDVWAMGVTLYCFVFGQCPFMDERIMCLHSKIKSQALEFPDQPDIAEDLKDLITRMLDKNPESRIVVPEIKLHPWVTRHGAEPLPSEDENCTLVEVTEEEVENSVKHIPSLATVILVKTMIRKRSFGNPFEGSRREERSLSAPGNLLTKKPTRECESLSELKEARQRRQPPGHRPAPRGGGGSALVRGSPCVESCWAPAPGSPARMHPLRPEEAMEPE</sequence>
<proteinExistence type="evidence at protein level"/>
<organism>
    <name type="scientific">Homo sapiens</name>
    <name type="common">Human</name>
    <dbReference type="NCBI Taxonomy" id="9606"/>
    <lineage>
        <taxon>Eukaryota</taxon>
        <taxon>Metazoa</taxon>
        <taxon>Chordata</taxon>
        <taxon>Craniata</taxon>
        <taxon>Vertebrata</taxon>
        <taxon>Euteleostomi</taxon>
        <taxon>Mammalia</taxon>
        <taxon>Eutheria</taxon>
        <taxon>Euarchontoglires</taxon>
        <taxon>Primates</taxon>
        <taxon>Haplorrhini</taxon>
        <taxon>Catarrhini</taxon>
        <taxon>Hominidae</taxon>
        <taxon>Homo</taxon>
    </lineage>
</organism>
<comment type="function">
    <text evidence="1 6 7 10 11">Calcium/calmodulin-dependent protein kinase belonging to a proposed calcium-triggered signaling cascade involved in a number of cellular processes. Isoform 1, isoform 2 and isoform 3 phosphorylate CAMK1 and CAMK4. Isoform 3 phosphorylates CAMK1D. Isoform 4, isoform 5 and isoform 6 lacking part of the calmodulin-binding domain are inactive. Efficiently phosphorylates 5'-AMP-activated protein kinase (AMPK) trimer, including that consisting of PRKAA1, PRKAB1 and PRKAG1. This phosphorylation is stimulated in response to Ca(2+) signals (By similarity). Seems to be involved in hippocampal activation of CREB1 (By similarity). May play a role in neurite growth. Isoform 3 may promote neurite elongation, while isoform 1 may promoter neurite branching.</text>
</comment>
<comment type="catalytic activity">
    <reaction>
        <text>L-seryl-[protein] + ATP = O-phospho-L-seryl-[protein] + ADP + H(+)</text>
        <dbReference type="Rhea" id="RHEA:17989"/>
        <dbReference type="Rhea" id="RHEA-COMP:9863"/>
        <dbReference type="Rhea" id="RHEA-COMP:11604"/>
        <dbReference type="ChEBI" id="CHEBI:15378"/>
        <dbReference type="ChEBI" id="CHEBI:29999"/>
        <dbReference type="ChEBI" id="CHEBI:30616"/>
        <dbReference type="ChEBI" id="CHEBI:83421"/>
        <dbReference type="ChEBI" id="CHEBI:456216"/>
        <dbReference type="EC" id="2.7.11.17"/>
    </reaction>
</comment>
<comment type="catalytic activity">
    <reaction>
        <text>L-threonyl-[protein] + ATP = O-phospho-L-threonyl-[protein] + ADP + H(+)</text>
        <dbReference type="Rhea" id="RHEA:46608"/>
        <dbReference type="Rhea" id="RHEA-COMP:11060"/>
        <dbReference type="Rhea" id="RHEA-COMP:11605"/>
        <dbReference type="ChEBI" id="CHEBI:15378"/>
        <dbReference type="ChEBI" id="CHEBI:30013"/>
        <dbReference type="ChEBI" id="CHEBI:30616"/>
        <dbReference type="ChEBI" id="CHEBI:61977"/>
        <dbReference type="ChEBI" id="CHEBI:456216"/>
        <dbReference type="EC" id="2.7.11.17"/>
    </reaction>
</comment>
<comment type="activity regulation">
    <text evidence="1">Activated by Ca(2+)/calmodulin. Binding of calmodulin may relieve intrasteric autoinhibition. Autophosphorylation does not alter activity or regulation by Ca(2+)/calmodulin. In part, activity is independent on Ca(2+)/calmodulin (By similarity).</text>
</comment>
<comment type="subunit">
    <text evidence="1">Interacts with calmodulin.</text>
</comment>
<comment type="subcellular location">
    <subcellularLocation>
        <location evidence="10">Nucleus</location>
    </subcellularLocation>
    <subcellularLocation>
        <location evidence="10">Cytoplasm</location>
    </subcellularLocation>
    <subcellularLocation>
        <location evidence="10">Cell projection</location>
        <location evidence="10">Neuron projection</location>
    </subcellularLocation>
    <text evidence="10">Predominantly nuclear in unstimulated cells, relocalizes into cytoplasm and neurites after forskolin induction.</text>
</comment>
<comment type="alternative products">
    <event type="alternative splicing"/>
    <isoform>
        <id>Q96RR4-1</id>
        <name>1</name>
        <name>Beta1</name>
        <name>CAMKK2+E16</name>
        <sequence type="displayed"/>
    </isoform>
    <isoform>
        <id>Q96RR4-2</id>
        <name>2</name>
        <name>Beta2</name>
        <sequence type="described" ref="VSP_012146 VSP_012147 VSP_012149"/>
    </isoform>
    <isoform>
        <id>Q96RR4-3</id>
        <name>3</name>
        <name>Beta1delta16</name>
        <name>CAMKK2-E16</name>
        <sequence type="described" ref="VSP_012143 VSP_012144 VSP_012145 VSP_012149"/>
    </isoform>
    <isoform>
        <id>Q96RR4-4</id>
        <name>4</name>
        <name>Beta1delta14</name>
        <sequence type="described" ref="VSP_012142"/>
    </isoform>
    <isoform>
        <id>Q96RR4-5</id>
        <name>5</name>
        <name>Beta1delta14/16</name>
        <name>beta-3x</name>
        <sequence type="described" ref="VSP_012142 VSP_012143 VSP_012144 VSP_012145 VSP_012149"/>
    </isoform>
    <isoform>
        <id>Q96RR4-6</id>
        <name>6</name>
        <name>Beta2delta14</name>
        <sequence type="described" ref="VSP_012142 VSP_012146 VSP_012147 VSP_012149"/>
    </isoform>
    <isoform>
        <id>Q96RR4-7</id>
        <name>7</name>
        <sequence type="described" ref="VSP_012148 VSP_012149"/>
    </isoform>
</comment>
<comment type="tissue specificity">
    <text evidence="11">Ubiquitously expressed with higher levels in the brain. Intermediate levels are detected in spleen, prostate, thyroid and leukocytes. The lowest level is in lung.</text>
</comment>
<comment type="induction">
    <molecule>Isoform 1</molecule>
    <text evidence="10">Up-regulated by PKA pathway.</text>
</comment>
<comment type="domain">
    <text>The autoinhibitory domain overlaps with the calmodulin binding region and may be involved in intrasteric autoinhibition.</text>
</comment>
<comment type="domain">
    <text evidence="1">The RP domain (arginine/proline-rich) is involved in the recognition of CAMKI and CAMK4 as substrates.</text>
</comment>
<comment type="PTM">
    <text evidence="10">Autophosphorylated and phosphorylated by PKA. Each isoform may show a different pattern of phosphorylation.</text>
</comment>
<comment type="miscellaneous">
    <molecule>Isoform 1</molecule>
    <text>Major isoform.</text>
</comment>
<comment type="miscellaneous">
    <molecule>Isoform 2</molecule>
    <text evidence="21">Major isoform.</text>
</comment>
<comment type="miscellaneous">
    <molecule>Isoform 5</molecule>
    <text evidence="21">Inactive. Does not activate CAMK1 and CAMK4.</text>
</comment>
<comment type="miscellaneous">
    <molecule>Isoform 6</molecule>
    <text evidence="21">Inactive. Does not activate CAMK1 and CAMK4.</text>
</comment>
<comment type="similarity">
    <text evidence="3">Belongs to the protein kinase superfamily. Ser/Thr protein kinase family.</text>
</comment>
<comment type="sequence caution" evidence="21">
    <conflict type="erroneous initiation">
        <sequence resource="EMBL-CDS" id="AAC72943"/>
    </conflict>
    <text>Truncated N-terminus.</text>
</comment>
<comment type="sequence caution" evidence="21">
    <conflict type="erroneous initiation">
        <sequence resource="EMBL-CDS" id="BAA34507"/>
    </conflict>
    <text>Extended N-terminus.</text>
</comment>
<comment type="sequence caution" evidence="21">
    <conflict type="miscellaneous discrepancy">
        <sequence resource="EMBL-CDS" id="CAD38990"/>
    </conflict>
    <text>Intron retention.</text>
</comment>
<keyword id="KW-0002">3D-structure</keyword>
<keyword id="KW-0007">Acetylation</keyword>
<keyword id="KW-0025">Alternative splicing</keyword>
<keyword id="KW-0067">ATP-binding</keyword>
<keyword id="KW-0112">Calmodulin-binding</keyword>
<keyword id="KW-0966">Cell projection</keyword>
<keyword id="KW-0963">Cytoplasm</keyword>
<keyword id="KW-0418">Kinase</keyword>
<keyword id="KW-0547">Nucleotide-binding</keyword>
<keyword id="KW-0539">Nucleus</keyword>
<keyword id="KW-0597">Phosphoprotein</keyword>
<keyword id="KW-1267">Proteomics identification</keyword>
<keyword id="KW-1185">Reference proteome</keyword>
<keyword id="KW-0723">Serine/threonine-protein kinase</keyword>
<keyword id="KW-0808">Transferase</keyword>
<reference key="1">
    <citation type="journal article" date="2001" name="J. Biol. Chem.">
        <title>Human Ca2+/calmodulin-dependent protein kinase kinase beta gene encodes multiple isoforms that display distinct kinase activity.</title>
        <authorList>
            <person name="Hsu L.-S."/>
            <person name="Chen G.-D."/>
            <person name="Lee L.-S."/>
            <person name="Chi C.-W."/>
            <person name="Cheng J.-F."/>
            <person name="Chen J.-Y."/>
        </authorList>
    </citation>
    <scope>NUCLEOTIDE SEQUENCE [GENOMIC DNA / MRNA] (ISOFORMS 1; 2; 3; 4; 5 AND 6)</scope>
    <scope>FUNCTION</scope>
    <scope>VARIANT SER-85</scope>
</reference>
<reference key="2">
    <citation type="journal article" date="1998" name="J. Biol. Chem.">
        <title>Components of a calmodulin-dependent protein kinase cascade. Molecular cloning, functional characterization and cellular localization of Ca2+/calmodulin-dependent protein kinase kinase beta.</title>
        <authorList>
            <person name="Anderson K.A."/>
            <person name="Means R.L."/>
            <person name="Huang Q.-H."/>
            <person name="Kemp B.E."/>
            <person name="Goldstein E.G."/>
            <person name="Selbert M.A."/>
            <person name="Edelman A.M."/>
            <person name="Fremeau R.T."/>
            <person name="Means A.R."/>
        </authorList>
    </citation>
    <scope>NUCLEOTIDE SEQUENCE [MRNA] (ISOFORM 1)</scope>
    <source>
        <tissue>Brain cortex</tissue>
    </source>
</reference>
<reference key="3">
    <citation type="journal article" date="2003" name="FEBS Lett.">
        <title>Identification and characterization of novel components of a Ca2+/calmodulin-dependent protein kinase cascade in HeLa cells.</title>
        <authorList>
            <person name="Ishikawa Y."/>
            <person name="Tokumitsu H."/>
            <person name="Inuzuka H."/>
            <person name="Murata-Hori M."/>
            <person name="Hosoya H."/>
            <person name="Kobayashi R."/>
        </authorList>
    </citation>
    <scope>NUCLEOTIDE SEQUENCE [MRNA] (ISOFORM 3)</scope>
    <scope>FUNCTION IN PHOSPHORYLATION OF CAMK1D</scope>
</reference>
<reference key="4">
    <citation type="journal article" date="1998" name="DNA Res.">
        <title>Prediction of the coding sequences of unidentified human genes. XI. The complete sequences of 100 new cDNA clones from brain which code for large proteins in vitro.</title>
        <authorList>
            <person name="Nagase T."/>
            <person name="Ishikawa K."/>
            <person name="Suyama M."/>
            <person name="Kikuno R."/>
            <person name="Miyajima N."/>
            <person name="Tanaka A."/>
            <person name="Kotani H."/>
            <person name="Nomura N."/>
            <person name="Ohara O."/>
        </authorList>
    </citation>
    <scope>NUCLEOTIDE SEQUENCE [LARGE SCALE MRNA] (ISOFORM 7)</scope>
    <scope>VARIANT SER-85</scope>
    <source>
        <tissue>Brain</tissue>
    </source>
</reference>
<reference key="5">
    <citation type="journal article" date="2002" name="DNA Res.">
        <title>Construction of expression-ready cDNA clones for KIAA genes: manual curation of 330 KIAA cDNA clones.</title>
        <authorList>
            <person name="Nakajima D."/>
            <person name="Okazaki N."/>
            <person name="Yamakawa H."/>
            <person name="Kikuno R."/>
            <person name="Ohara O."/>
            <person name="Nagase T."/>
        </authorList>
    </citation>
    <scope>SEQUENCE REVISION</scope>
</reference>
<reference key="6">
    <citation type="journal article" date="2004" name="Nat. Genet.">
        <title>Complete sequencing and characterization of 21,243 full-length human cDNAs.</title>
        <authorList>
            <person name="Ota T."/>
            <person name="Suzuki Y."/>
            <person name="Nishikawa T."/>
            <person name="Otsuki T."/>
            <person name="Sugiyama T."/>
            <person name="Irie R."/>
            <person name="Wakamatsu A."/>
            <person name="Hayashi K."/>
            <person name="Sato H."/>
            <person name="Nagai K."/>
            <person name="Kimura K."/>
            <person name="Makita H."/>
            <person name="Sekine M."/>
            <person name="Obayashi M."/>
            <person name="Nishi T."/>
            <person name="Shibahara T."/>
            <person name="Tanaka T."/>
            <person name="Ishii S."/>
            <person name="Yamamoto J."/>
            <person name="Saito K."/>
            <person name="Kawai Y."/>
            <person name="Isono Y."/>
            <person name="Nakamura Y."/>
            <person name="Nagahari K."/>
            <person name="Murakami K."/>
            <person name="Yasuda T."/>
            <person name="Iwayanagi T."/>
            <person name="Wagatsuma M."/>
            <person name="Shiratori A."/>
            <person name="Sudo H."/>
            <person name="Hosoiri T."/>
            <person name="Kaku Y."/>
            <person name="Kodaira H."/>
            <person name="Kondo H."/>
            <person name="Sugawara M."/>
            <person name="Takahashi M."/>
            <person name="Kanda K."/>
            <person name="Yokoi T."/>
            <person name="Furuya T."/>
            <person name="Kikkawa E."/>
            <person name="Omura Y."/>
            <person name="Abe K."/>
            <person name="Kamihara K."/>
            <person name="Katsuta N."/>
            <person name="Sato K."/>
            <person name="Tanikawa M."/>
            <person name="Yamazaki M."/>
            <person name="Ninomiya K."/>
            <person name="Ishibashi T."/>
            <person name="Yamashita H."/>
            <person name="Murakawa K."/>
            <person name="Fujimori K."/>
            <person name="Tanai H."/>
            <person name="Kimata M."/>
            <person name="Watanabe M."/>
            <person name="Hiraoka S."/>
            <person name="Chiba Y."/>
            <person name="Ishida S."/>
            <person name="Ono Y."/>
            <person name="Takiguchi S."/>
            <person name="Watanabe S."/>
            <person name="Yosida M."/>
            <person name="Hotuta T."/>
            <person name="Kusano J."/>
            <person name="Kanehori K."/>
            <person name="Takahashi-Fujii A."/>
            <person name="Hara H."/>
            <person name="Tanase T.-O."/>
            <person name="Nomura Y."/>
            <person name="Togiya S."/>
            <person name="Komai F."/>
            <person name="Hara R."/>
            <person name="Takeuchi K."/>
            <person name="Arita M."/>
            <person name="Imose N."/>
            <person name="Musashino K."/>
            <person name="Yuuki H."/>
            <person name="Oshima A."/>
            <person name="Sasaki N."/>
            <person name="Aotsuka S."/>
            <person name="Yoshikawa Y."/>
            <person name="Matsunawa H."/>
            <person name="Ichihara T."/>
            <person name="Shiohata N."/>
            <person name="Sano S."/>
            <person name="Moriya S."/>
            <person name="Momiyama H."/>
            <person name="Satoh N."/>
            <person name="Takami S."/>
            <person name="Terashima Y."/>
            <person name="Suzuki O."/>
            <person name="Nakagawa S."/>
            <person name="Senoh A."/>
            <person name="Mizoguchi H."/>
            <person name="Goto Y."/>
            <person name="Shimizu F."/>
            <person name="Wakebe H."/>
            <person name="Hishigaki H."/>
            <person name="Watanabe T."/>
            <person name="Sugiyama A."/>
            <person name="Takemoto M."/>
            <person name="Kawakami B."/>
            <person name="Yamazaki M."/>
            <person name="Watanabe K."/>
            <person name="Kumagai A."/>
            <person name="Itakura S."/>
            <person name="Fukuzumi Y."/>
            <person name="Fujimori Y."/>
            <person name="Komiyama M."/>
            <person name="Tashiro H."/>
            <person name="Tanigami A."/>
            <person name="Fujiwara T."/>
            <person name="Ono T."/>
            <person name="Yamada K."/>
            <person name="Fujii Y."/>
            <person name="Ozaki K."/>
            <person name="Hirao M."/>
            <person name="Ohmori Y."/>
            <person name="Kawabata A."/>
            <person name="Hikiji T."/>
            <person name="Kobatake N."/>
            <person name="Inagaki H."/>
            <person name="Ikema Y."/>
            <person name="Okamoto S."/>
            <person name="Okitani R."/>
            <person name="Kawakami T."/>
            <person name="Noguchi S."/>
            <person name="Itoh T."/>
            <person name="Shigeta K."/>
            <person name="Senba T."/>
            <person name="Matsumura K."/>
            <person name="Nakajima Y."/>
            <person name="Mizuno T."/>
            <person name="Morinaga M."/>
            <person name="Sasaki M."/>
            <person name="Togashi T."/>
            <person name="Oyama M."/>
            <person name="Hata H."/>
            <person name="Watanabe M."/>
            <person name="Komatsu T."/>
            <person name="Mizushima-Sugano J."/>
            <person name="Satoh T."/>
            <person name="Shirai Y."/>
            <person name="Takahashi Y."/>
            <person name="Nakagawa K."/>
            <person name="Okumura K."/>
            <person name="Nagase T."/>
            <person name="Nomura N."/>
            <person name="Kikuchi H."/>
            <person name="Masuho Y."/>
            <person name="Yamashita R."/>
            <person name="Nakai K."/>
            <person name="Yada T."/>
            <person name="Nakamura Y."/>
            <person name="Ohara O."/>
            <person name="Isogai T."/>
            <person name="Sugano S."/>
        </authorList>
    </citation>
    <scope>NUCLEOTIDE SEQUENCE [LARGE SCALE MRNA] (ISOFORM 3)</scope>
    <source>
        <tissue>Stomach</tissue>
    </source>
</reference>
<reference key="7">
    <citation type="journal article" date="2006" name="Nature">
        <title>The finished DNA sequence of human chromosome 12.</title>
        <authorList>
            <person name="Scherer S.E."/>
            <person name="Muzny D.M."/>
            <person name="Buhay C.J."/>
            <person name="Chen R."/>
            <person name="Cree A."/>
            <person name="Ding Y."/>
            <person name="Dugan-Rocha S."/>
            <person name="Gill R."/>
            <person name="Gunaratne P."/>
            <person name="Harris R.A."/>
            <person name="Hawes A.C."/>
            <person name="Hernandez J."/>
            <person name="Hodgson A.V."/>
            <person name="Hume J."/>
            <person name="Jackson A."/>
            <person name="Khan Z.M."/>
            <person name="Kovar-Smith C."/>
            <person name="Lewis L.R."/>
            <person name="Lozado R.J."/>
            <person name="Metzker M.L."/>
            <person name="Milosavljevic A."/>
            <person name="Miner G.R."/>
            <person name="Montgomery K.T."/>
            <person name="Morgan M.B."/>
            <person name="Nazareth L.V."/>
            <person name="Scott G."/>
            <person name="Sodergren E."/>
            <person name="Song X.-Z."/>
            <person name="Steffen D."/>
            <person name="Lovering R.C."/>
            <person name="Wheeler D.A."/>
            <person name="Worley K.C."/>
            <person name="Yuan Y."/>
            <person name="Zhang Z."/>
            <person name="Adams C.Q."/>
            <person name="Ansari-Lari M.A."/>
            <person name="Ayele M."/>
            <person name="Brown M.J."/>
            <person name="Chen G."/>
            <person name="Chen Z."/>
            <person name="Clerc-Blankenburg K.P."/>
            <person name="Davis C."/>
            <person name="Delgado O."/>
            <person name="Dinh H.H."/>
            <person name="Draper H."/>
            <person name="Gonzalez-Garay M.L."/>
            <person name="Havlak P."/>
            <person name="Jackson L.R."/>
            <person name="Jacob L.S."/>
            <person name="Kelly S.H."/>
            <person name="Li L."/>
            <person name="Li Z."/>
            <person name="Liu J."/>
            <person name="Liu W."/>
            <person name="Lu J."/>
            <person name="Maheshwari M."/>
            <person name="Nguyen B.-V."/>
            <person name="Okwuonu G.O."/>
            <person name="Pasternak S."/>
            <person name="Perez L.M."/>
            <person name="Plopper F.J.H."/>
            <person name="Santibanez J."/>
            <person name="Shen H."/>
            <person name="Tabor P.E."/>
            <person name="Verduzco D."/>
            <person name="Waldron L."/>
            <person name="Wang Q."/>
            <person name="Williams G.A."/>
            <person name="Zhang J."/>
            <person name="Zhou J."/>
            <person name="Allen C.C."/>
            <person name="Amin A.G."/>
            <person name="Anyalebechi V."/>
            <person name="Bailey M."/>
            <person name="Barbaria J.A."/>
            <person name="Bimage K.E."/>
            <person name="Bryant N.P."/>
            <person name="Burch P.E."/>
            <person name="Burkett C.E."/>
            <person name="Burrell K.L."/>
            <person name="Calderon E."/>
            <person name="Cardenas V."/>
            <person name="Carter K."/>
            <person name="Casias K."/>
            <person name="Cavazos I."/>
            <person name="Cavazos S.R."/>
            <person name="Ceasar H."/>
            <person name="Chacko J."/>
            <person name="Chan S.N."/>
            <person name="Chavez D."/>
            <person name="Christopoulos C."/>
            <person name="Chu J."/>
            <person name="Cockrell R."/>
            <person name="Cox C.D."/>
            <person name="Dang M."/>
            <person name="Dathorne S.R."/>
            <person name="David R."/>
            <person name="Davis C.M."/>
            <person name="Davy-Carroll L."/>
            <person name="Deshazo D.R."/>
            <person name="Donlin J.E."/>
            <person name="D'Souza L."/>
            <person name="Eaves K.A."/>
            <person name="Egan A."/>
            <person name="Emery-Cohen A.J."/>
            <person name="Escotto M."/>
            <person name="Flagg N."/>
            <person name="Forbes L.D."/>
            <person name="Gabisi A.M."/>
            <person name="Garza M."/>
            <person name="Hamilton C."/>
            <person name="Henderson N."/>
            <person name="Hernandez O."/>
            <person name="Hines S."/>
            <person name="Hogues M.E."/>
            <person name="Huang M."/>
            <person name="Idlebird D.G."/>
            <person name="Johnson R."/>
            <person name="Jolivet A."/>
            <person name="Jones S."/>
            <person name="Kagan R."/>
            <person name="King L.M."/>
            <person name="Leal B."/>
            <person name="Lebow H."/>
            <person name="Lee S."/>
            <person name="LeVan J.M."/>
            <person name="Lewis L.C."/>
            <person name="London P."/>
            <person name="Lorensuhewa L.M."/>
            <person name="Loulseged H."/>
            <person name="Lovett D.A."/>
            <person name="Lucier A."/>
            <person name="Lucier R.L."/>
            <person name="Ma J."/>
            <person name="Madu R.C."/>
            <person name="Mapua P."/>
            <person name="Martindale A.D."/>
            <person name="Martinez E."/>
            <person name="Massey E."/>
            <person name="Mawhiney S."/>
            <person name="Meador M.G."/>
            <person name="Mendez S."/>
            <person name="Mercado C."/>
            <person name="Mercado I.C."/>
            <person name="Merritt C.E."/>
            <person name="Miner Z.L."/>
            <person name="Minja E."/>
            <person name="Mitchell T."/>
            <person name="Mohabbat F."/>
            <person name="Mohabbat K."/>
            <person name="Montgomery B."/>
            <person name="Moore N."/>
            <person name="Morris S."/>
            <person name="Munidasa M."/>
            <person name="Ngo R.N."/>
            <person name="Nguyen N.B."/>
            <person name="Nickerson E."/>
            <person name="Nwaokelemeh O.O."/>
            <person name="Nwokenkwo S."/>
            <person name="Obregon M."/>
            <person name="Oguh M."/>
            <person name="Oragunye N."/>
            <person name="Oviedo R.J."/>
            <person name="Parish B.J."/>
            <person name="Parker D.N."/>
            <person name="Parrish J."/>
            <person name="Parks K.L."/>
            <person name="Paul H.A."/>
            <person name="Payton B.A."/>
            <person name="Perez A."/>
            <person name="Perrin W."/>
            <person name="Pickens A."/>
            <person name="Primus E.L."/>
            <person name="Pu L.-L."/>
            <person name="Puazo M."/>
            <person name="Quiles M.M."/>
            <person name="Quiroz J.B."/>
            <person name="Rabata D."/>
            <person name="Reeves K."/>
            <person name="Ruiz S.J."/>
            <person name="Shao H."/>
            <person name="Sisson I."/>
            <person name="Sonaike T."/>
            <person name="Sorelle R.P."/>
            <person name="Sutton A.E."/>
            <person name="Svatek A.F."/>
            <person name="Svetz L.A."/>
            <person name="Tamerisa K.S."/>
            <person name="Taylor T.R."/>
            <person name="Teague B."/>
            <person name="Thomas N."/>
            <person name="Thorn R.D."/>
            <person name="Trejos Z.Y."/>
            <person name="Trevino B.K."/>
            <person name="Ukegbu O.N."/>
            <person name="Urban J.B."/>
            <person name="Vasquez L.I."/>
            <person name="Vera V.A."/>
            <person name="Villasana D.M."/>
            <person name="Wang L."/>
            <person name="Ward-Moore S."/>
            <person name="Warren J.T."/>
            <person name="Wei X."/>
            <person name="White F."/>
            <person name="Williamson A.L."/>
            <person name="Wleczyk R."/>
            <person name="Wooden H.S."/>
            <person name="Wooden S.H."/>
            <person name="Yen J."/>
            <person name="Yoon L."/>
            <person name="Yoon V."/>
            <person name="Zorrilla S.E."/>
            <person name="Nelson D."/>
            <person name="Kucherlapati R."/>
            <person name="Weinstock G."/>
            <person name="Gibbs R.A."/>
        </authorList>
    </citation>
    <scope>NUCLEOTIDE SEQUENCE [LARGE SCALE GENOMIC DNA]</scope>
</reference>
<reference key="8">
    <citation type="journal article" date="2004" name="Genome Res.">
        <title>The status, quality, and expansion of the NIH full-length cDNA project: the Mammalian Gene Collection (MGC).</title>
        <authorList>
            <consortium name="The MGC Project Team"/>
        </authorList>
    </citation>
    <scope>NUCLEOTIDE SEQUENCE [LARGE SCALE MRNA] (ISOFORM 3)</scope>
    <scope>NUCLEOTIDE SEQUENCE [LARGE SCALE MRNA] OF 233-588 (ISOFORM 5)</scope>
    <scope>VARIANT SER-85</scope>
    <source>
        <tissue>Placenta</tissue>
    </source>
</reference>
<reference key="9">
    <citation type="journal article" date="1998" name="J. Biomed. Sci.">
        <title>Cloning, expression and chromosomal localization of human Ca2+/calmodulin-dependent protein kinase kinase.</title>
        <authorList>
            <person name="Hsu L.-S."/>
            <person name="Tsou A.-P."/>
            <person name="Chi C.-W."/>
            <person name="Lee C.-H."/>
            <person name="Chen J.-Y."/>
        </authorList>
    </citation>
    <scope>NUCLEOTIDE SEQUENCE [MRNA] OF 117-588 (ISOFORM 2)</scope>
    <scope>FUNCTION IN PHOSPHORYLATION OF CAMK1</scope>
    <scope>TISSUE SPECIFICITY</scope>
</reference>
<reference key="10">
    <citation type="journal article" date="2007" name="BMC Genomics">
        <title>The full-ORF clone resource of the German cDNA consortium.</title>
        <authorList>
            <person name="Bechtel S."/>
            <person name="Rosenfelder H."/>
            <person name="Duda A."/>
            <person name="Schmidt C.P."/>
            <person name="Ernst U."/>
            <person name="Wellenreuther R."/>
            <person name="Mehrle A."/>
            <person name="Schuster C."/>
            <person name="Bahr A."/>
            <person name="Bloecker H."/>
            <person name="Heubner D."/>
            <person name="Hoerlein A."/>
            <person name="Michel G."/>
            <person name="Wedler H."/>
            <person name="Koehrer K."/>
            <person name="Ottenwaelder B."/>
            <person name="Poustka A."/>
            <person name="Wiemann S."/>
            <person name="Schupp I."/>
        </authorList>
    </citation>
    <scope>NUCLEOTIDE SEQUENCE [LARGE SCALE MRNA] OF 254-588 (ISOFORM 7)</scope>
    <source>
        <tissue>Amygdala</tissue>
    </source>
</reference>
<reference key="11">
    <citation type="submission" date="1998-08" db="EMBL/GenBank/DDBJ databases">
        <title>Full-insert sequence of mapped XREF EST.</title>
        <authorList>
            <person name="Barrow I.K.-P."/>
            <person name="Boguski M.S."/>
            <person name="Touchman J.W."/>
            <person name="Spencer F."/>
        </authorList>
    </citation>
    <scope>NUCLEOTIDE SEQUENCE [LARGE SCALE MRNA] OF 338-533 (ISOFORM 2)</scope>
</reference>
<reference key="12">
    <citation type="journal article" date="2008" name="Mol. Cell">
        <title>Kinase-selective enrichment enables quantitative phosphoproteomics of the kinome across the cell cycle.</title>
        <authorList>
            <person name="Daub H."/>
            <person name="Olsen J.V."/>
            <person name="Bairlein M."/>
            <person name="Gnad F."/>
            <person name="Oppermann F.S."/>
            <person name="Korner R."/>
            <person name="Greff Z."/>
            <person name="Keri G."/>
            <person name="Stemmann O."/>
            <person name="Mann M."/>
        </authorList>
    </citation>
    <scope>PHOSPHORYLATION [LARGE SCALE ANALYSIS] AT SER-495</scope>
    <scope>PHOSPHORYLATION [LARGE SCALE ANALYSIS] AT SER-522 (ISOFORM 3)</scope>
    <scope>PHOSPHORYLATION [LARGE SCALE ANALYSIS] AT SER-479 (ISOFORM 5)</scope>
    <scope>IDENTIFICATION BY MASS SPECTROMETRY [LARGE SCALE ANALYSIS]</scope>
    <source>
        <tissue>Cervix carcinoma</tissue>
    </source>
</reference>
<reference key="13">
    <citation type="journal article" date="2008" name="Proc. Natl. Acad. Sci. U.S.A.">
        <title>A quantitative atlas of mitotic phosphorylation.</title>
        <authorList>
            <person name="Dephoure N."/>
            <person name="Zhou C."/>
            <person name="Villen J."/>
            <person name="Beausoleil S.A."/>
            <person name="Bakalarski C.E."/>
            <person name="Elledge S.J."/>
            <person name="Gygi S.P."/>
        </authorList>
    </citation>
    <scope>IDENTIFICATION BY MASS SPECTROMETRY [LARGE SCALE ANALYSIS]</scope>
    <source>
        <tissue>Cervix carcinoma</tissue>
    </source>
</reference>
<reference key="14">
    <citation type="journal article" date="2011" name="RNA Biol.">
        <title>Differential effects of PKA-controlled CaMKK2 variants on neuronal differentiation.</title>
        <authorList>
            <person name="Cao W."/>
            <person name="Sohail M."/>
            <person name="Liu G."/>
            <person name="Koumbadinga G.A."/>
            <person name="Lobo V.G."/>
            <person name="Xie J."/>
        </authorList>
    </citation>
    <scope>FUNCTION</scope>
    <scope>SUBCELLULAR LOCATION</scope>
    <scope>AUTOPHOSPHORYLATION</scope>
    <scope>PHOSPHORYLATION BY PKA</scope>
    <scope>INDUCTION OF ISOFORM 1</scope>
</reference>
<reference key="15">
    <citation type="journal article" date="2012" name="Proc. Natl. Acad. Sci. U.S.A.">
        <title>N-terminal acetylome analyses and functional insights of the N-terminal acetyltransferase NatB.</title>
        <authorList>
            <person name="Van Damme P."/>
            <person name="Lasa M."/>
            <person name="Polevoda B."/>
            <person name="Gazquez C."/>
            <person name="Elosegui-Artola A."/>
            <person name="Kim D.S."/>
            <person name="De Juan-Pardo E."/>
            <person name="Demeyer K."/>
            <person name="Hole K."/>
            <person name="Larrea E."/>
            <person name="Timmerman E."/>
            <person name="Prieto J."/>
            <person name="Arnesen T."/>
            <person name="Sherman F."/>
            <person name="Gevaert K."/>
            <person name="Aldabe R."/>
        </authorList>
    </citation>
    <scope>ACETYLATION [LARGE SCALE ANALYSIS] AT SER-2</scope>
    <scope>CLEAVAGE OF INITIATOR METHIONINE [LARGE SCALE ANALYSIS]</scope>
    <scope>IDENTIFICATION BY MASS SPECTROMETRY [LARGE SCALE ANALYSIS]</scope>
</reference>
<reference key="16">
    <citation type="journal article" date="2013" name="J. Proteome Res.">
        <title>Toward a comprehensive characterization of a human cancer cell phosphoproteome.</title>
        <authorList>
            <person name="Zhou H."/>
            <person name="Di Palma S."/>
            <person name="Preisinger C."/>
            <person name="Peng M."/>
            <person name="Polat A.N."/>
            <person name="Heck A.J."/>
            <person name="Mohammed S."/>
        </authorList>
    </citation>
    <scope>PHOSPHORYLATION [LARGE SCALE ANALYSIS] AT SER-114; SER-129; SER-495 AND SER-511</scope>
    <scope>IDENTIFICATION BY MASS SPECTROMETRY [LARGE SCALE ANALYSIS]</scope>
    <source>
        <tissue>Cervix carcinoma</tissue>
        <tissue>Erythroleukemia</tissue>
    </source>
</reference>
<reference key="17">
    <citation type="journal article" date="2014" name="J. Proteomics">
        <title>An enzyme assisted RP-RPLC approach for in-depth analysis of human liver phosphoproteome.</title>
        <authorList>
            <person name="Bian Y."/>
            <person name="Song C."/>
            <person name="Cheng K."/>
            <person name="Dong M."/>
            <person name="Wang F."/>
            <person name="Huang J."/>
            <person name="Sun D."/>
            <person name="Wang L."/>
            <person name="Ye M."/>
            <person name="Zou H."/>
        </authorList>
    </citation>
    <scope>PHOSPHORYLATION [LARGE SCALE ANALYSIS] AT SER-495</scope>
    <scope>IDENTIFICATION BY MASS SPECTROMETRY [LARGE SCALE ANALYSIS]</scope>
    <source>
        <tissue>Liver</tissue>
    </source>
</reference>
<reference key="18">
    <citation type="journal article" date="2007" name="Nature">
        <title>Patterns of somatic mutation in human cancer genomes.</title>
        <authorList>
            <person name="Greenman C."/>
            <person name="Stephens P."/>
            <person name="Smith R."/>
            <person name="Dalgliesh G.L."/>
            <person name="Hunter C."/>
            <person name="Bignell G."/>
            <person name="Davies H."/>
            <person name="Teague J."/>
            <person name="Butler A."/>
            <person name="Stevens C."/>
            <person name="Edkins S."/>
            <person name="O'Meara S."/>
            <person name="Vastrik I."/>
            <person name="Schmidt E.E."/>
            <person name="Avis T."/>
            <person name="Barthorpe S."/>
            <person name="Bhamra G."/>
            <person name="Buck G."/>
            <person name="Choudhury B."/>
            <person name="Clements J."/>
            <person name="Cole J."/>
            <person name="Dicks E."/>
            <person name="Forbes S."/>
            <person name="Gray K."/>
            <person name="Halliday K."/>
            <person name="Harrison R."/>
            <person name="Hills K."/>
            <person name="Hinton J."/>
            <person name="Jenkinson A."/>
            <person name="Jones D."/>
            <person name="Menzies A."/>
            <person name="Mironenko T."/>
            <person name="Perry J."/>
            <person name="Raine K."/>
            <person name="Richardson D."/>
            <person name="Shepherd R."/>
            <person name="Small A."/>
            <person name="Tofts C."/>
            <person name="Varian J."/>
            <person name="Webb T."/>
            <person name="West S."/>
            <person name="Widaa S."/>
            <person name="Yates A."/>
            <person name="Cahill D.P."/>
            <person name="Louis D.N."/>
            <person name="Goldstraw P."/>
            <person name="Nicholson A.G."/>
            <person name="Brasseur F."/>
            <person name="Looijenga L."/>
            <person name="Weber B.L."/>
            <person name="Chiew Y.-E."/>
            <person name="DeFazio A."/>
            <person name="Greaves M.F."/>
            <person name="Green A.R."/>
            <person name="Campbell P."/>
            <person name="Birney E."/>
            <person name="Easton D.F."/>
            <person name="Chenevix-Trench G."/>
            <person name="Tan M.-H."/>
            <person name="Khoo S.K."/>
            <person name="Teh B.T."/>
            <person name="Yuen S.T."/>
            <person name="Leung S.Y."/>
            <person name="Wooster R."/>
            <person name="Futreal P.A."/>
            <person name="Stratton M.R."/>
        </authorList>
    </citation>
    <scope>VARIANTS [LARGE SCALE ANALYSIS] ASN-10; SER-85; TYR-123; LEU-127; THR-182 AND HIS-492</scope>
</reference>
<accession>Q96RR4</accession>
<accession>A8K7Q7</accession>
<accession>O94883</accession>
<accession>Q8IUG2</accession>
<accession>Q8IUG3</accession>
<accession>Q8N3I4</accession>
<accession>Q8WY03</accession>
<accession>Q8WY04</accession>
<accession>Q8WY05</accession>
<accession>Q8WY06</accession>
<accession>Q96RP1</accession>
<accession>Q96RP2</accession>
<accession>Q96RR3</accession>
<accession>Q9BWE9</accession>
<accession>Q9UER3</accession>
<accession>Q9UES2</accession>
<accession>Q9Y5N2</accession>